<organism>
    <name type="scientific">Burkholderia cenocepacia (strain HI2424)</name>
    <dbReference type="NCBI Taxonomy" id="331272"/>
    <lineage>
        <taxon>Bacteria</taxon>
        <taxon>Pseudomonadati</taxon>
        <taxon>Pseudomonadota</taxon>
        <taxon>Betaproteobacteria</taxon>
        <taxon>Burkholderiales</taxon>
        <taxon>Burkholderiaceae</taxon>
        <taxon>Burkholderia</taxon>
        <taxon>Burkholderia cepacia complex</taxon>
    </lineage>
</organism>
<sequence>MSTMTPAEIVSELDKHIIGQAKAKKAVAVALRNRWRRQQVAEPLRQEITPKNILMIGPTGVGKTEIARRLAKLADAPFIKIEATKFTEVGYVGRDVDSIVRDLIEISVKQTREAEMRKVRSKATDQAEDRILDILLPQPRAVGFGGNAEHANDDNNATRQTFRKRLREGQLDDKEVELDLEQPSVGMDIMAPPGMEEMTEQIRSMFSNLGSGKKQRRKVKIKEALKLLTDEEAAKMLNEEEVKTKAVQNVEQNGIVFLDEIDKITSRNNEGSGGEVSRQGVQRDLLPLVEGTTVNTKYGMVKTDHILFIASGAFHLAKPSDLIPELQGRFPIRVELDSLSVEDFEAILDATDASLVKQYQALLATEDVQLEFAADGIRRLAEIAFAVNEKTENIGARRLYTVIEKLLEEVSFSAGNHAGERVTIDAKYVDRALGEVAQDEDLSRYVL</sequence>
<proteinExistence type="inferred from homology"/>
<keyword id="KW-0067">ATP-binding</keyword>
<keyword id="KW-0143">Chaperone</keyword>
<keyword id="KW-0963">Cytoplasm</keyword>
<keyword id="KW-0547">Nucleotide-binding</keyword>
<keyword id="KW-0346">Stress response</keyword>
<comment type="function">
    <text evidence="1">ATPase subunit of a proteasome-like degradation complex; this subunit has chaperone activity. The binding of ATP and its subsequent hydrolysis by HslU are essential for unfolding of protein substrates subsequently hydrolyzed by HslV. HslU recognizes the N-terminal part of its protein substrates and unfolds these before they are guided to HslV for hydrolysis.</text>
</comment>
<comment type="subunit">
    <text evidence="1">A double ring-shaped homohexamer of HslV is capped on each side by a ring-shaped HslU homohexamer. The assembly of the HslU/HslV complex is dependent on binding of ATP.</text>
</comment>
<comment type="subcellular location">
    <subcellularLocation>
        <location evidence="1">Cytoplasm</location>
    </subcellularLocation>
</comment>
<comment type="similarity">
    <text evidence="1">Belongs to the ClpX chaperone family. HslU subfamily.</text>
</comment>
<accession>A0KBG3</accession>
<feature type="chain" id="PRO_1000012712" description="ATP-dependent protease ATPase subunit HslU">
    <location>
        <begin position="1"/>
        <end position="447"/>
    </location>
</feature>
<feature type="binding site" evidence="1">
    <location>
        <position position="18"/>
    </location>
    <ligand>
        <name>ATP</name>
        <dbReference type="ChEBI" id="CHEBI:30616"/>
    </ligand>
</feature>
<feature type="binding site" evidence="1">
    <location>
        <begin position="60"/>
        <end position="65"/>
    </location>
    <ligand>
        <name>ATP</name>
        <dbReference type="ChEBI" id="CHEBI:30616"/>
    </ligand>
</feature>
<feature type="binding site" evidence="1">
    <location>
        <position position="259"/>
    </location>
    <ligand>
        <name>ATP</name>
        <dbReference type="ChEBI" id="CHEBI:30616"/>
    </ligand>
</feature>
<feature type="binding site" evidence="1">
    <location>
        <position position="325"/>
    </location>
    <ligand>
        <name>ATP</name>
        <dbReference type="ChEBI" id="CHEBI:30616"/>
    </ligand>
</feature>
<feature type="binding site" evidence="1">
    <location>
        <position position="397"/>
    </location>
    <ligand>
        <name>ATP</name>
        <dbReference type="ChEBI" id="CHEBI:30616"/>
    </ligand>
</feature>
<evidence type="ECO:0000255" key="1">
    <source>
        <dbReference type="HAMAP-Rule" id="MF_00249"/>
    </source>
</evidence>
<reference key="1">
    <citation type="submission" date="2006-08" db="EMBL/GenBank/DDBJ databases">
        <title>Complete sequence of chromosome 1 of Burkholderia cenocepacia HI2424.</title>
        <authorList>
            <person name="Copeland A."/>
            <person name="Lucas S."/>
            <person name="Lapidus A."/>
            <person name="Barry K."/>
            <person name="Detter J.C."/>
            <person name="Glavina del Rio T."/>
            <person name="Hammon N."/>
            <person name="Israni S."/>
            <person name="Pitluck S."/>
            <person name="Chain P."/>
            <person name="Malfatti S."/>
            <person name="Shin M."/>
            <person name="Vergez L."/>
            <person name="Schmutz J."/>
            <person name="Larimer F."/>
            <person name="Land M."/>
            <person name="Hauser L."/>
            <person name="Kyrpides N."/>
            <person name="Kim E."/>
            <person name="LiPuma J.J."/>
            <person name="Gonzalez C.F."/>
            <person name="Konstantinidis K."/>
            <person name="Tiedje J.M."/>
            <person name="Richardson P."/>
        </authorList>
    </citation>
    <scope>NUCLEOTIDE SEQUENCE [LARGE SCALE GENOMIC DNA]</scope>
    <source>
        <strain>HI2424</strain>
    </source>
</reference>
<protein>
    <recommendedName>
        <fullName evidence="1">ATP-dependent protease ATPase subunit HslU</fullName>
    </recommendedName>
    <alternativeName>
        <fullName evidence="1">Unfoldase HslU</fullName>
    </alternativeName>
</protein>
<dbReference type="EMBL" id="CP000458">
    <property type="protein sequence ID" value="ABK09840.1"/>
    <property type="molecule type" value="Genomic_DNA"/>
</dbReference>
<dbReference type="RefSeq" id="WP_006477496.1">
    <property type="nucleotide sequence ID" value="NC_008542.1"/>
</dbReference>
<dbReference type="SMR" id="A0KBG3"/>
<dbReference type="GeneID" id="83049889"/>
<dbReference type="KEGG" id="bch:Bcen2424_3092"/>
<dbReference type="HOGENOM" id="CLU_033123_0_0_4"/>
<dbReference type="GO" id="GO:0009376">
    <property type="term" value="C:HslUV protease complex"/>
    <property type="evidence" value="ECO:0007669"/>
    <property type="project" value="UniProtKB-UniRule"/>
</dbReference>
<dbReference type="GO" id="GO:0005524">
    <property type="term" value="F:ATP binding"/>
    <property type="evidence" value="ECO:0007669"/>
    <property type="project" value="UniProtKB-UniRule"/>
</dbReference>
<dbReference type="GO" id="GO:0016887">
    <property type="term" value="F:ATP hydrolysis activity"/>
    <property type="evidence" value="ECO:0007669"/>
    <property type="project" value="InterPro"/>
</dbReference>
<dbReference type="GO" id="GO:0008233">
    <property type="term" value="F:peptidase activity"/>
    <property type="evidence" value="ECO:0007669"/>
    <property type="project" value="InterPro"/>
</dbReference>
<dbReference type="GO" id="GO:0036402">
    <property type="term" value="F:proteasome-activating activity"/>
    <property type="evidence" value="ECO:0007669"/>
    <property type="project" value="UniProtKB-UniRule"/>
</dbReference>
<dbReference type="GO" id="GO:0043335">
    <property type="term" value="P:protein unfolding"/>
    <property type="evidence" value="ECO:0007669"/>
    <property type="project" value="UniProtKB-UniRule"/>
</dbReference>
<dbReference type="GO" id="GO:0051603">
    <property type="term" value="P:proteolysis involved in protein catabolic process"/>
    <property type="evidence" value="ECO:0007669"/>
    <property type="project" value="TreeGrafter"/>
</dbReference>
<dbReference type="CDD" id="cd19498">
    <property type="entry name" value="RecA-like_HslU"/>
    <property type="match status" value="1"/>
</dbReference>
<dbReference type="FunFam" id="3.40.50.300:FF:000213">
    <property type="entry name" value="ATP-dependent protease ATPase subunit HslU"/>
    <property type="match status" value="1"/>
</dbReference>
<dbReference type="FunFam" id="3.40.50.300:FF:000220">
    <property type="entry name" value="ATP-dependent protease ATPase subunit HslU"/>
    <property type="match status" value="1"/>
</dbReference>
<dbReference type="Gene3D" id="1.10.8.60">
    <property type="match status" value="1"/>
</dbReference>
<dbReference type="Gene3D" id="3.40.50.300">
    <property type="entry name" value="P-loop containing nucleotide triphosphate hydrolases"/>
    <property type="match status" value="2"/>
</dbReference>
<dbReference type="HAMAP" id="MF_00249">
    <property type="entry name" value="HslU"/>
    <property type="match status" value="1"/>
</dbReference>
<dbReference type="InterPro" id="IPR003593">
    <property type="entry name" value="AAA+_ATPase"/>
</dbReference>
<dbReference type="InterPro" id="IPR050052">
    <property type="entry name" value="ATP-dep_Clp_protease_ClpX"/>
</dbReference>
<dbReference type="InterPro" id="IPR003959">
    <property type="entry name" value="ATPase_AAA_core"/>
</dbReference>
<dbReference type="InterPro" id="IPR019489">
    <property type="entry name" value="Clp_ATPase_C"/>
</dbReference>
<dbReference type="InterPro" id="IPR004491">
    <property type="entry name" value="HslU"/>
</dbReference>
<dbReference type="InterPro" id="IPR027417">
    <property type="entry name" value="P-loop_NTPase"/>
</dbReference>
<dbReference type="NCBIfam" id="TIGR00390">
    <property type="entry name" value="hslU"/>
    <property type="match status" value="1"/>
</dbReference>
<dbReference type="NCBIfam" id="NF003544">
    <property type="entry name" value="PRK05201.1"/>
    <property type="match status" value="1"/>
</dbReference>
<dbReference type="PANTHER" id="PTHR48102">
    <property type="entry name" value="ATP-DEPENDENT CLP PROTEASE ATP-BINDING SUBUNIT CLPX-LIKE, MITOCHONDRIAL-RELATED"/>
    <property type="match status" value="1"/>
</dbReference>
<dbReference type="PANTHER" id="PTHR48102:SF3">
    <property type="entry name" value="ATP-DEPENDENT PROTEASE ATPASE SUBUNIT HSLU"/>
    <property type="match status" value="1"/>
</dbReference>
<dbReference type="Pfam" id="PF00004">
    <property type="entry name" value="AAA"/>
    <property type="match status" value="1"/>
</dbReference>
<dbReference type="Pfam" id="PF07724">
    <property type="entry name" value="AAA_2"/>
    <property type="match status" value="1"/>
</dbReference>
<dbReference type="SMART" id="SM00382">
    <property type="entry name" value="AAA"/>
    <property type="match status" value="1"/>
</dbReference>
<dbReference type="SMART" id="SM01086">
    <property type="entry name" value="ClpB_D2-small"/>
    <property type="match status" value="1"/>
</dbReference>
<dbReference type="SUPFAM" id="SSF52540">
    <property type="entry name" value="P-loop containing nucleoside triphosphate hydrolases"/>
    <property type="match status" value="1"/>
</dbReference>
<gene>
    <name evidence="1" type="primary">hslU</name>
    <name type="ordered locus">Bcen2424_3092</name>
</gene>
<name>HSLU_BURCH</name>